<proteinExistence type="inferred from homology"/>
<reference key="1">
    <citation type="submission" date="2007-06" db="EMBL/GenBank/DDBJ databases">
        <title>Complete sequence of Clostridium beijerinckii NCIMB 8052.</title>
        <authorList>
            <consortium name="US DOE Joint Genome Institute"/>
            <person name="Copeland A."/>
            <person name="Lucas S."/>
            <person name="Lapidus A."/>
            <person name="Barry K."/>
            <person name="Detter J.C."/>
            <person name="Glavina del Rio T."/>
            <person name="Hammon N."/>
            <person name="Israni S."/>
            <person name="Dalin E."/>
            <person name="Tice H."/>
            <person name="Pitluck S."/>
            <person name="Sims D."/>
            <person name="Brettin T."/>
            <person name="Bruce D."/>
            <person name="Tapia R."/>
            <person name="Brainard J."/>
            <person name="Schmutz J."/>
            <person name="Larimer F."/>
            <person name="Land M."/>
            <person name="Hauser L."/>
            <person name="Kyrpides N."/>
            <person name="Mikhailova N."/>
            <person name="Bennet G."/>
            <person name="Cann I."/>
            <person name="Chen J.-S."/>
            <person name="Contreras A.L."/>
            <person name="Jones D."/>
            <person name="Kashket E."/>
            <person name="Mitchell W."/>
            <person name="Stoddard S."/>
            <person name="Schwarz W."/>
            <person name="Qureshi N."/>
            <person name="Young M."/>
            <person name="Shi Z."/>
            <person name="Ezeji T."/>
            <person name="White B."/>
            <person name="Blaschek H."/>
            <person name="Richardson P."/>
        </authorList>
    </citation>
    <scope>NUCLEOTIDE SEQUENCE [LARGE SCALE GENOMIC DNA]</scope>
    <source>
        <strain>ATCC 51743 / NCIMB 8052</strain>
    </source>
</reference>
<gene>
    <name evidence="1" type="primary">thyA</name>
    <name type="ordered locus">Cbei_4952</name>
</gene>
<accession>A6M378</accession>
<sequence length="263" mass="30645">MSLYDDKYLAIANDILENGYFDNNRTGVKTYKLPHQIMQFNLEKEFPILTTKFVAFKTAVKELLWIFKDQSNSVKELQSQNVKIWDEWMMEDGTIGTSYGWIVKKFDQIDKLIDALKNNPQDRRMMINLWQIPYLDSAPLYPCCFLTMWDVTDGKLNCMLVQRSGDWGLGVPFNTSQYAVLVHLLAQVTGLKPGLFTHVINNAHIYENQVDGLKLQLTRKNDAYNAPKLWINPEITNFYDFTPDDIKLEDYKHHESIKMDVSV</sequence>
<feature type="chain" id="PRO_1000073871" description="Thymidylate synthase">
    <location>
        <begin position="1"/>
        <end position="263"/>
    </location>
</feature>
<feature type="active site" description="Nucleophile" evidence="1">
    <location>
        <position position="143"/>
    </location>
</feature>
<feature type="binding site" description="in other chain" evidence="1">
    <location>
        <position position="25"/>
    </location>
    <ligand>
        <name>dUMP</name>
        <dbReference type="ChEBI" id="CHEBI:246422"/>
        <note>ligand shared between dimeric partners</note>
    </ligand>
</feature>
<feature type="binding site" evidence="1">
    <location>
        <begin position="123"/>
        <end position="124"/>
    </location>
    <ligand>
        <name>dUMP</name>
        <dbReference type="ChEBI" id="CHEBI:246422"/>
        <note>ligand shared between dimeric partners</note>
    </ligand>
</feature>
<feature type="binding site" description="in other chain" evidence="1">
    <location>
        <begin position="163"/>
        <end position="166"/>
    </location>
    <ligand>
        <name>dUMP</name>
        <dbReference type="ChEBI" id="CHEBI:246422"/>
        <note>ligand shared between dimeric partners</note>
    </ligand>
</feature>
<feature type="binding site" evidence="1">
    <location>
        <position position="166"/>
    </location>
    <ligand>
        <name>(6R)-5,10-methylene-5,6,7,8-tetrahydrofolate</name>
        <dbReference type="ChEBI" id="CHEBI:15636"/>
    </ligand>
</feature>
<feature type="binding site" description="in other chain" evidence="1">
    <location>
        <position position="174"/>
    </location>
    <ligand>
        <name>dUMP</name>
        <dbReference type="ChEBI" id="CHEBI:246422"/>
        <note>ligand shared between dimeric partners</note>
    </ligand>
</feature>
<feature type="binding site" description="in other chain" evidence="1">
    <location>
        <begin position="204"/>
        <end position="206"/>
    </location>
    <ligand>
        <name>dUMP</name>
        <dbReference type="ChEBI" id="CHEBI:246422"/>
        <note>ligand shared between dimeric partners</note>
    </ligand>
</feature>
<feature type="binding site" evidence="1">
    <location>
        <position position="262"/>
    </location>
    <ligand>
        <name>(6R)-5,10-methylene-5,6,7,8-tetrahydrofolate</name>
        <dbReference type="ChEBI" id="CHEBI:15636"/>
    </ligand>
</feature>
<comment type="function">
    <text evidence="1">Catalyzes the reductive methylation of 2'-deoxyuridine-5'-monophosphate (dUMP) to 2'-deoxythymidine-5'-monophosphate (dTMP) while utilizing 5,10-methylenetetrahydrofolate (mTHF) as the methyl donor and reductant in the reaction, yielding dihydrofolate (DHF) as a by-product. This enzymatic reaction provides an intracellular de novo source of dTMP, an essential precursor for DNA biosynthesis.</text>
</comment>
<comment type="catalytic activity">
    <reaction evidence="1">
        <text>dUMP + (6R)-5,10-methylene-5,6,7,8-tetrahydrofolate = 7,8-dihydrofolate + dTMP</text>
        <dbReference type="Rhea" id="RHEA:12104"/>
        <dbReference type="ChEBI" id="CHEBI:15636"/>
        <dbReference type="ChEBI" id="CHEBI:57451"/>
        <dbReference type="ChEBI" id="CHEBI:63528"/>
        <dbReference type="ChEBI" id="CHEBI:246422"/>
        <dbReference type="EC" id="2.1.1.45"/>
    </reaction>
</comment>
<comment type="pathway">
    <text evidence="1">Pyrimidine metabolism; dTTP biosynthesis.</text>
</comment>
<comment type="subunit">
    <text evidence="1">Homodimer.</text>
</comment>
<comment type="subcellular location">
    <subcellularLocation>
        <location evidence="1">Cytoplasm</location>
    </subcellularLocation>
</comment>
<comment type="similarity">
    <text evidence="1">Belongs to the thymidylate synthase family. Bacterial-type ThyA subfamily.</text>
</comment>
<dbReference type="EC" id="2.1.1.45" evidence="1"/>
<dbReference type="EMBL" id="CP000721">
    <property type="protein sequence ID" value="ABR37058.1"/>
    <property type="molecule type" value="Genomic_DNA"/>
</dbReference>
<dbReference type="RefSeq" id="WP_012061102.1">
    <property type="nucleotide sequence ID" value="NC_009617.1"/>
</dbReference>
<dbReference type="SMR" id="A6M378"/>
<dbReference type="KEGG" id="cbe:Cbei_4952"/>
<dbReference type="eggNOG" id="COG0207">
    <property type="taxonomic scope" value="Bacteria"/>
</dbReference>
<dbReference type="HOGENOM" id="CLU_021669_0_0_9"/>
<dbReference type="UniPathway" id="UPA00575"/>
<dbReference type="Proteomes" id="UP000000565">
    <property type="component" value="Chromosome"/>
</dbReference>
<dbReference type="GO" id="GO:0005829">
    <property type="term" value="C:cytosol"/>
    <property type="evidence" value="ECO:0007669"/>
    <property type="project" value="TreeGrafter"/>
</dbReference>
<dbReference type="GO" id="GO:0004799">
    <property type="term" value="F:thymidylate synthase activity"/>
    <property type="evidence" value="ECO:0007669"/>
    <property type="project" value="UniProtKB-UniRule"/>
</dbReference>
<dbReference type="GO" id="GO:0006231">
    <property type="term" value="P:dTMP biosynthetic process"/>
    <property type="evidence" value="ECO:0007669"/>
    <property type="project" value="UniProtKB-UniRule"/>
</dbReference>
<dbReference type="GO" id="GO:0006235">
    <property type="term" value="P:dTTP biosynthetic process"/>
    <property type="evidence" value="ECO:0007669"/>
    <property type="project" value="UniProtKB-UniRule"/>
</dbReference>
<dbReference type="GO" id="GO:0032259">
    <property type="term" value="P:methylation"/>
    <property type="evidence" value="ECO:0007669"/>
    <property type="project" value="UniProtKB-KW"/>
</dbReference>
<dbReference type="CDD" id="cd00351">
    <property type="entry name" value="TS_Pyrimidine_HMase"/>
    <property type="match status" value="1"/>
</dbReference>
<dbReference type="Gene3D" id="3.30.572.10">
    <property type="entry name" value="Thymidylate synthase/dCMP hydroxymethylase domain"/>
    <property type="match status" value="1"/>
</dbReference>
<dbReference type="HAMAP" id="MF_00008">
    <property type="entry name" value="Thymidy_synth_bact"/>
    <property type="match status" value="1"/>
</dbReference>
<dbReference type="InterPro" id="IPR045097">
    <property type="entry name" value="Thymidate_synth/dCMP_Mease"/>
</dbReference>
<dbReference type="InterPro" id="IPR023451">
    <property type="entry name" value="Thymidate_synth/dCMP_Mease_dom"/>
</dbReference>
<dbReference type="InterPro" id="IPR036926">
    <property type="entry name" value="Thymidate_synth/dCMP_Mease_sf"/>
</dbReference>
<dbReference type="InterPro" id="IPR000398">
    <property type="entry name" value="Thymidylate_synthase"/>
</dbReference>
<dbReference type="InterPro" id="IPR020940">
    <property type="entry name" value="Thymidylate_synthase_AS"/>
</dbReference>
<dbReference type="NCBIfam" id="NF002495">
    <property type="entry name" value="PRK01827.1-1"/>
    <property type="match status" value="1"/>
</dbReference>
<dbReference type="NCBIfam" id="TIGR03284">
    <property type="entry name" value="thym_sym"/>
    <property type="match status" value="1"/>
</dbReference>
<dbReference type="PANTHER" id="PTHR11548">
    <property type="entry name" value="THYMIDYLATE SYNTHASE 1"/>
    <property type="match status" value="1"/>
</dbReference>
<dbReference type="PANTHER" id="PTHR11548:SF1">
    <property type="entry name" value="THYMIDYLATE SYNTHASE 1"/>
    <property type="match status" value="1"/>
</dbReference>
<dbReference type="Pfam" id="PF00303">
    <property type="entry name" value="Thymidylat_synt"/>
    <property type="match status" value="1"/>
</dbReference>
<dbReference type="PRINTS" id="PR00108">
    <property type="entry name" value="THYMDSNTHASE"/>
</dbReference>
<dbReference type="SUPFAM" id="SSF55831">
    <property type="entry name" value="Thymidylate synthase/dCMP hydroxymethylase"/>
    <property type="match status" value="1"/>
</dbReference>
<dbReference type="PROSITE" id="PS00091">
    <property type="entry name" value="THYMIDYLATE_SYNTHASE"/>
    <property type="match status" value="1"/>
</dbReference>
<protein>
    <recommendedName>
        <fullName evidence="1">Thymidylate synthase</fullName>
        <shortName evidence="1">TS</shortName>
        <shortName evidence="1">TSase</shortName>
        <ecNumber evidence="1">2.1.1.45</ecNumber>
    </recommendedName>
</protein>
<organism>
    <name type="scientific">Clostridium beijerinckii (strain ATCC 51743 / NCIMB 8052)</name>
    <name type="common">Clostridium acetobutylicum</name>
    <dbReference type="NCBI Taxonomy" id="290402"/>
    <lineage>
        <taxon>Bacteria</taxon>
        <taxon>Bacillati</taxon>
        <taxon>Bacillota</taxon>
        <taxon>Clostridia</taxon>
        <taxon>Eubacteriales</taxon>
        <taxon>Clostridiaceae</taxon>
        <taxon>Clostridium</taxon>
    </lineage>
</organism>
<keyword id="KW-0963">Cytoplasm</keyword>
<keyword id="KW-0489">Methyltransferase</keyword>
<keyword id="KW-0545">Nucleotide biosynthesis</keyword>
<keyword id="KW-0808">Transferase</keyword>
<name>TYSY_CLOB8</name>
<evidence type="ECO:0000255" key="1">
    <source>
        <dbReference type="HAMAP-Rule" id="MF_00008"/>
    </source>
</evidence>